<proteinExistence type="inferred from homology"/>
<name>BTG_DICDI</name>
<keyword id="KW-1185">Reference proteome</keyword>
<protein>
    <recommendedName>
        <fullName>BTG family protein</fullName>
    </recommendedName>
</protein>
<feature type="chain" id="PRO_0000344493" description="BTG family protein">
    <location>
        <begin position="1"/>
        <end position="423"/>
    </location>
</feature>
<feature type="region of interest" description="Disordered" evidence="1">
    <location>
        <begin position="1"/>
        <end position="54"/>
    </location>
</feature>
<feature type="region of interest" description="Disordered" evidence="1">
    <location>
        <begin position="69"/>
        <end position="96"/>
    </location>
</feature>
<feature type="region of interest" description="Disordered" evidence="1">
    <location>
        <begin position="257"/>
        <end position="297"/>
    </location>
</feature>
<feature type="region of interest" description="Disordered" evidence="1">
    <location>
        <begin position="341"/>
        <end position="398"/>
    </location>
</feature>
<feature type="compositionally biased region" description="Polar residues" evidence="1">
    <location>
        <begin position="19"/>
        <end position="28"/>
    </location>
</feature>
<feature type="compositionally biased region" description="Low complexity" evidence="1">
    <location>
        <begin position="43"/>
        <end position="54"/>
    </location>
</feature>
<feature type="compositionally biased region" description="Low complexity" evidence="1">
    <location>
        <begin position="257"/>
        <end position="272"/>
    </location>
</feature>
<feature type="compositionally biased region" description="Polar residues" evidence="1">
    <location>
        <begin position="273"/>
        <end position="283"/>
    </location>
</feature>
<feature type="compositionally biased region" description="Low complexity" evidence="1">
    <location>
        <begin position="284"/>
        <end position="297"/>
    </location>
</feature>
<feature type="compositionally biased region" description="Low complexity" evidence="1">
    <location>
        <begin position="341"/>
        <end position="351"/>
    </location>
</feature>
<feature type="compositionally biased region" description="Polar residues" evidence="1">
    <location>
        <begin position="352"/>
        <end position="367"/>
    </location>
</feature>
<feature type="compositionally biased region" description="Low complexity" evidence="1">
    <location>
        <begin position="369"/>
        <end position="379"/>
    </location>
</feature>
<gene>
    <name type="primary">btg</name>
    <name type="ORF">DDB_G0285069</name>
</gene>
<accession>Q54NU5</accession>
<comment type="similarity">
    <text evidence="2">Belongs to the BTG family.</text>
</comment>
<reference key="1">
    <citation type="journal article" date="2005" name="Nature">
        <title>The genome of the social amoeba Dictyostelium discoideum.</title>
        <authorList>
            <person name="Eichinger L."/>
            <person name="Pachebat J.A."/>
            <person name="Gloeckner G."/>
            <person name="Rajandream M.A."/>
            <person name="Sucgang R."/>
            <person name="Berriman M."/>
            <person name="Song J."/>
            <person name="Olsen R."/>
            <person name="Szafranski K."/>
            <person name="Xu Q."/>
            <person name="Tunggal B."/>
            <person name="Kummerfeld S."/>
            <person name="Madera M."/>
            <person name="Konfortov B.A."/>
            <person name="Rivero F."/>
            <person name="Bankier A.T."/>
            <person name="Lehmann R."/>
            <person name="Hamlin N."/>
            <person name="Davies R."/>
            <person name="Gaudet P."/>
            <person name="Fey P."/>
            <person name="Pilcher K."/>
            <person name="Chen G."/>
            <person name="Saunders D."/>
            <person name="Sodergren E.J."/>
            <person name="Davis P."/>
            <person name="Kerhornou A."/>
            <person name="Nie X."/>
            <person name="Hall N."/>
            <person name="Anjard C."/>
            <person name="Hemphill L."/>
            <person name="Bason N."/>
            <person name="Farbrother P."/>
            <person name="Desany B."/>
            <person name="Just E."/>
            <person name="Morio T."/>
            <person name="Rost R."/>
            <person name="Churcher C.M."/>
            <person name="Cooper J."/>
            <person name="Haydock S."/>
            <person name="van Driessche N."/>
            <person name="Cronin A."/>
            <person name="Goodhead I."/>
            <person name="Muzny D.M."/>
            <person name="Mourier T."/>
            <person name="Pain A."/>
            <person name="Lu M."/>
            <person name="Harper D."/>
            <person name="Lindsay R."/>
            <person name="Hauser H."/>
            <person name="James K.D."/>
            <person name="Quiles M."/>
            <person name="Madan Babu M."/>
            <person name="Saito T."/>
            <person name="Buchrieser C."/>
            <person name="Wardroper A."/>
            <person name="Felder M."/>
            <person name="Thangavelu M."/>
            <person name="Johnson D."/>
            <person name="Knights A."/>
            <person name="Loulseged H."/>
            <person name="Mungall K.L."/>
            <person name="Oliver K."/>
            <person name="Price C."/>
            <person name="Quail M.A."/>
            <person name="Urushihara H."/>
            <person name="Hernandez J."/>
            <person name="Rabbinowitsch E."/>
            <person name="Steffen D."/>
            <person name="Sanders M."/>
            <person name="Ma J."/>
            <person name="Kohara Y."/>
            <person name="Sharp S."/>
            <person name="Simmonds M.N."/>
            <person name="Spiegler S."/>
            <person name="Tivey A."/>
            <person name="Sugano S."/>
            <person name="White B."/>
            <person name="Walker D."/>
            <person name="Woodward J.R."/>
            <person name="Winckler T."/>
            <person name="Tanaka Y."/>
            <person name="Shaulsky G."/>
            <person name="Schleicher M."/>
            <person name="Weinstock G.M."/>
            <person name="Rosenthal A."/>
            <person name="Cox E.C."/>
            <person name="Chisholm R.L."/>
            <person name="Gibbs R.A."/>
            <person name="Loomis W.F."/>
            <person name="Platzer M."/>
            <person name="Kay R.R."/>
            <person name="Williams J.G."/>
            <person name="Dear P.H."/>
            <person name="Noegel A.A."/>
            <person name="Barrell B.G."/>
            <person name="Kuspa A."/>
        </authorList>
    </citation>
    <scope>NUCLEOTIDE SEQUENCE [LARGE SCALE GENOMIC DNA]</scope>
    <source>
        <strain>AX4</strain>
    </source>
</reference>
<evidence type="ECO:0000256" key="1">
    <source>
        <dbReference type="SAM" id="MobiDB-lite"/>
    </source>
</evidence>
<evidence type="ECO:0000305" key="2"/>
<sequence length="423" mass="46423">MSPYAPENNQDPGGGLVTEGNQPQQNNFVNTNKSPTTTPPPQTSNVVSTPPATAINAAGVNNGLINGVLNNSSSSSSSSSSSSSSSPTPTSISPPLSDIEQTLNAYPTDLPELVVAACWWAESLGKLNMNIPKENIKRFRKELIFALRDRIKGHWYPDYPERGQGYRAIICEETTDRLLMDAAKKSDIVGEFRQLVKQNTTMWIDPGNVTYRHGKHYEKTLYPFNSINNHYSHHNNNNNNNNGINITNSNNTIPINTSGYHNINNHLNNSNNTIPPQQSQQHINNNNNNSNNNTTNNIILNSLHHHQTQISQQHLNNNNNQNNFSYGITSTRLTQNVVNSNSNGLNGRVSSPSLSSTAPVFSPSNSMYHHVQQQSHSPSISPPASPSKDLGNSSGNNTNVYSSNNNLFYNSNTSSSKIKLAYS</sequence>
<dbReference type="EMBL" id="AAFI02000073">
    <property type="protein sequence ID" value="EAL64998.1"/>
    <property type="molecule type" value="Genomic_DNA"/>
</dbReference>
<dbReference type="RefSeq" id="XP_639972.1">
    <property type="nucleotide sequence ID" value="XM_634880.1"/>
</dbReference>
<dbReference type="SMR" id="Q54NU5"/>
<dbReference type="FunCoup" id="Q54NU5">
    <property type="interactions" value="219"/>
</dbReference>
<dbReference type="STRING" id="44689.Q54NU5"/>
<dbReference type="GlyGen" id="Q54NU5">
    <property type="glycosylation" value="1 site"/>
</dbReference>
<dbReference type="PaxDb" id="44689-DDB0266860"/>
<dbReference type="EnsemblProtists" id="EAL64998">
    <property type="protein sequence ID" value="EAL64998"/>
    <property type="gene ID" value="DDB_G0285069"/>
</dbReference>
<dbReference type="GeneID" id="8624883"/>
<dbReference type="KEGG" id="ddi:DDB_G0285069"/>
<dbReference type="dictyBase" id="DDB_G0285069">
    <property type="gene designation" value="btg"/>
</dbReference>
<dbReference type="VEuPathDB" id="AmoebaDB:DDB_G0285069"/>
<dbReference type="eggNOG" id="KOG4006">
    <property type="taxonomic scope" value="Eukaryota"/>
</dbReference>
<dbReference type="HOGENOM" id="CLU_649614_0_0_1"/>
<dbReference type="InParanoid" id="Q54NU5"/>
<dbReference type="OMA" id="RDRIKGH"/>
<dbReference type="Reactome" id="R-DDI-6804115">
    <property type="pathway name" value="TP53 regulates transcription of additional cell cycle genes whose exact role in the p53 pathway remain uncertain"/>
</dbReference>
<dbReference type="PRO" id="PR:Q54NU5"/>
<dbReference type="Proteomes" id="UP000002195">
    <property type="component" value="Chromosome 4"/>
</dbReference>
<dbReference type="GO" id="GO:0005737">
    <property type="term" value="C:cytoplasm"/>
    <property type="evidence" value="ECO:0000318"/>
    <property type="project" value="GO_Central"/>
</dbReference>
<dbReference type="GO" id="GO:0005634">
    <property type="term" value="C:nucleus"/>
    <property type="evidence" value="ECO:0000318"/>
    <property type="project" value="GO_Central"/>
</dbReference>
<dbReference type="GO" id="GO:0045165">
    <property type="term" value="P:cell fate commitment"/>
    <property type="evidence" value="ECO:0000316"/>
    <property type="project" value="dictyBase"/>
</dbReference>
<dbReference type="Gene3D" id="3.90.640.90">
    <property type="entry name" value="Anti-proliferative protein, N-terminal domain"/>
    <property type="match status" value="1"/>
</dbReference>
<dbReference type="InterPro" id="IPR002087">
    <property type="entry name" value="Anti_prolifrtn"/>
</dbReference>
<dbReference type="InterPro" id="IPR033332">
    <property type="entry name" value="BTG"/>
</dbReference>
<dbReference type="InterPro" id="IPR036054">
    <property type="entry name" value="BTG-like_sf"/>
</dbReference>
<dbReference type="PANTHER" id="PTHR22978">
    <property type="entry name" value="B-CELL TRANSLOCATION GENE"/>
    <property type="match status" value="1"/>
</dbReference>
<dbReference type="PANTHER" id="PTHR22978:SF22">
    <property type="entry name" value="BTG FAMILY PROTEIN"/>
    <property type="match status" value="1"/>
</dbReference>
<dbReference type="Pfam" id="PF07742">
    <property type="entry name" value="BTG"/>
    <property type="match status" value="1"/>
</dbReference>
<dbReference type="PRINTS" id="PR00310">
    <property type="entry name" value="ANTIPRLFBTG1"/>
</dbReference>
<dbReference type="SMART" id="SM00099">
    <property type="entry name" value="btg1"/>
    <property type="match status" value="1"/>
</dbReference>
<dbReference type="SUPFAM" id="SSF160696">
    <property type="entry name" value="BTG domain-like"/>
    <property type="match status" value="1"/>
</dbReference>
<organism>
    <name type="scientific">Dictyostelium discoideum</name>
    <name type="common">Social amoeba</name>
    <dbReference type="NCBI Taxonomy" id="44689"/>
    <lineage>
        <taxon>Eukaryota</taxon>
        <taxon>Amoebozoa</taxon>
        <taxon>Evosea</taxon>
        <taxon>Eumycetozoa</taxon>
        <taxon>Dictyostelia</taxon>
        <taxon>Dictyosteliales</taxon>
        <taxon>Dictyosteliaceae</taxon>
        <taxon>Dictyostelium</taxon>
    </lineage>
</organism>